<comment type="function">
    <text evidence="1">NDH-1 shuttles electrons from NADH, via FMN and iron-sulfur (Fe-S) centers, to quinones in the respiratory chain. The immediate electron acceptor for the enzyme in this species is believed to be a menaquinone. Couples the redox reaction to proton translocation (for every two electrons transferred, four hydrogen ions are translocated across the cytoplasmic membrane), and thus conserves the redox energy in a proton gradient.</text>
</comment>
<comment type="catalytic activity">
    <reaction evidence="1">
        <text>a quinone + NADH + 5 H(+)(in) = a quinol + NAD(+) + 4 H(+)(out)</text>
        <dbReference type="Rhea" id="RHEA:57888"/>
        <dbReference type="ChEBI" id="CHEBI:15378"/>
        <dbReference type="ChEBI" id="CHEBI:24646"/>
        <dbReference type="ChEBI" id="CHEBI:57540"/>
        <dbReference type="ChEBI" id="CHEBI:57945"/>
        <dbReference type="ChEBI" id="CHEBI:132124"/>
    </reaction>
</comment>
<comment type="subunit">
    <text evidence="1">NDH-1 is composed of 14 different subunits. Subunits NuoB, C, D, E, F, and G constitute the peripheral sector of the complex.</text>
</comment>
<comment type="subcellular location">
    <subcellularLocation>
        <location evidence="1">Cell membrane</location>
        <topology evidence="1">Peripheral membrane protein</topology>
        <orientation evidence="1">Cytoplasmic side</orientation>
    </subcellularLocation>
</comment>
<comment type="similarity">
    <text evidence="1">Belongs to the complex I 49 kDa subunit family.</text>
</comment>
<accession>Q814W9</accession>
<name>NUOD_BACCR</name>
<gene>
    <name evidence="1" type="primary">nuoD</name>
    <name type="ordered locus">BC_5298</name>
</gene>
<proteinExistence type="inferred from homology"/>
<reference key="1">
    <citation type="journal article" date="2003" name="Nature">
        <title>Genome sequence of Bacillus cereus and comparative analysis with Bacillus anthracis.</title>
        <authorList>
            <person name="Ivanova N."/>
            <person name="Sorokin A."/>
            <person name="Anderson I."/>
            <person name="Galleron N."/>
            <person name="Candelon B."/>
            <person name="Kapatral V."/>
            <person name="Bhattacharyya A."/>
            <person name="Reznik G."/>
            <person name="Mikhailova N."/>
            <person name="Lapidus A."/>
            <person name="Chu L."/>
            <person name="Mazur M."/>
            <person name="Goltsman E."/>
            <person name="Larsen N."/>
            <person name="D'Souza M."/>
            <person name="Walunas T."/>
            <person name="Grechkin Y."/>
            <person name="Pusch G."/>
            <person name="Haselkorn R."/>
            <person name="Fonstein M."/>
            <person name="Ehrlich S.D."/>
            <person name="Overbeek R."/>
            <person name="Kyrpides N.C."/>
        </authorList>
    </citation>
    <scope>NUCLEOTIDE SEQUENCE [LARGE SCALE GENOMIC DNA]</scope>
    <source>
        <strain>ATCC 14579 / DSM 31 / CCUG 7414 / JCM 2152 / NBRC 15305 / NCIMB 9373 / NCTC 2599 / NRRL B-3711</strain>
    </source>
</reference>
<dbReference type="EC" id="7.1.1.-" evidence="1"/>
<dbReference type="EMBL" id="AE016877">
    <property type="protein sequence ID" value="AAP12162.1"/>
    <property type="molecule type" value="Genomic_DNA"/>
</dbReference>
<dbReference type="RefSeq" id="NP_834961.1">
    <property type="nucleotide sequence ID" value="NC_004722.1"/>
</dbReference>
<dbReference type="RefSeq" id="WP_000621434.1">
    <property type="nucleotide sequence ID" value="NZ_CP138336.1"/>
</dbReference>
<dbReference type="SMR" id="Q814W9"/>
<dbReference type="STRING" id="226900.BC_5298"/>
<dbReference type="GeneID" id="92803553"/>
<dbReference type="KEGG" id="bce:BC5298"/>
<dbReference type="PATRIC" id="fig|226900.8.peg.5469"/>
<dbReference type="HOGENOM" id="CLU_015134_1_2_9"/>
<dbReference type="OrthoDB" id="9801496at2"/>
<dbReference type="Proteomes" id="UP000001417">
    <property type="component" value="Chromosome"/>
</dbReference>
<dbReference type="GO" id="GO:0005886">
    <property type="term" value="C:plasma membrane"/>
    <property type="evidence" value="ECO:0007669"/>
    <property type="project" value="UniProtKB-SubCell"/>
</dbReference>
<dbReference type="GO" id="GO:0051287">
    <property type="term" value="F:NAD binding"/>
    <property type="evidence" value="ECO:0007669"/>
    <property type="project" value="InterPro"/>
</dbReference>
<dbReference type="GO" id="GO:0050136">
    <property type="term" value="F:NADH:ubiquinone reductase (non-electrogenic) activity"/>
    <property type="evidence" value="ECO:0007669"/>
    <property type="project" value="UniProtKB-UniRule"/>
</dbReference>
<dbReference type="GO" id="GO:0048038">
    <property type="term" value="F:quinone binding"/>
    <property type="evidence" value="ECO:0007669"/>
    <property type="project" value="UniProtKB-KW"/>
</dbReference>
<dbReference type="FunFam" id="1.10.645.10:FF:000006">
    <property type="entry name" value="NADH-quinone oxidoreductase subunit D"/>
    <property type="match status" value="1"/>
</dbReference>
<dbReference type="Gene3D" id="1.10.645.10">
    <property type="entry name" value="Cytochrome-c3 Hydrogenase, chain B"/>
    <property type="match status" value="1"/>
</dbReference>
<dbReference type="HAMAP" id="MF_01358">
    <property type="entry name" value="NDH1_NuoD"/>
    <property type="match status" value="1"/>
</dbReference>
<dbReference type="InterPro" id="IPR001135">
    <property type="entry name" value="NADH_Q_OxRdtase_suD"/>
</dbReference>
<dbReference type="InterPro" id="IPR022885">
    <property type="entry name" value="NDH1_su_D/H"/>
</dbReference>
<dbReference type="InterPro" id="IPR029014">
    <property type="entry name" value="NiFe-Hase_large"/>
</dbReference>
<dbReference type="NCBIfam" id="NF004739">
    <property type="entry name" value="PRK06075.1"/>
    <property type="match status" value="1"/>
</dbReference>
<dbReference type="NCBIfam" id="NF008974">
    <property type="entry name" value="PRK12322.1"/>
    <property type="match status" value="1"/>
</dbReference>
<dbReference type="PANTHER" id="PTHR11993:SF10">
    <property type="entry name" value="NADH DEHYDROGENASE [UBIQUINONE] IRON-SULFUR PROTEIN 2, MITOCHONDRIAL"/>
    <property type="match status" value="1"/>
</dbReference>
<dbReference type="PANTHER" id="PTHR11993">
    <property type="entry name" value="NADH-UBIQUINONE OXIDOREDUCTASE 49 KDA SUBUNIT"/>
    <property type="match status" value="1"/>
</dbReference>
<dbReference type="Pfam" id="PF00346">
    <property type="entry name" value="Complex1_49kDa"/>
    <property type="match status" value="2"/>
</dbReference>
<dbReference type="SUPFAM" id="SSF56762">
    <property type="entry name" value="HydB/Nqo4-like"/>
    <property type="match status" value="1"/>
</dbReference>
<feature type="chain" id="PRO_0000357765" description="NADH-quinone oxidoreductase subunit D">
    <location>
        <begin position="1"/>
        <end position="366"/>
    </location>
</feature>
<sequence>MIRTEEMLLNVGPQHPSTHGVFRLVIKIDGEIIKEATPVIGYLHRGTEKIAESLQYTQIIPYTDRMDYLSAMTNNYVICHAVETMMGLEIPERAEYLRVLAMELGRIASHLVWWGTNLLDIGAVSPFLYAFREREMIINLLNELCGARLTFNYMRVGGVKWDAPDGWIEKVEEFVPYMREQLAGYHDLVSGNEIFLNRVKGVGIYSAEEAISYSLSGANLRCTGVNWDLRKDEPYSIYDRFDFDIPVGSVGDAWDRYVCRMQEIEESLKIVEQAVQQFPKDGAVLAKVPKIIKAPKGEAFVRIESPRGEIGCYIASDGKKEPYRLKFRRPSFYNLQILPKLLKGENIANLITILGGVDIVLGEVDG</sequence>
<keyword id="KW-1003">Cell membrane</keyword>
<keyword id="KW-0472">Membrane</keyword>
<keyword id="KW-0520">NAD</keyword>
<keyword id="KW-0874">Quinone</keyword>
<keyword id="KW-1185">Reference proteome</keyword>
<keyword id="KW-1278">Translocase</keyword>
<keyword id="KW-0813">Transport</keyword>
<organism>
    <name type="scientific">Bacillus cereus (strain ATCC 14579 / DSM 31 / CCUG 7414 / JCM 2152 / NBRC 15305 / NCIMB 9373 / NCTC 2599 / NRRL B-3711)</name>
    <dbReference type="NCBI Taxonomy" id="226900"/>
    <lineage>
        <taxon>Bacteria</taxon>
        <taxon>Bacillati</taxon>
        <taxon>Bacillota</taxon>
        <taxon>Bacilli</taxon>
        <taxon>Bacillales</taxon>
        <taxon>Bacillaceae</taxon>
        <taxon>Bacillus</taxon>
        <taxon>Bacillus cereus group</taxon>
    </lineage>
</organism>
<evidence type="ECO:0000255" key="1">
    <source>
        <dbReference type="HAMAP-Rule" id="MF_01358"/>
    </source>
</evidence>
<protein>
    <recommendedName>
        <fullName evidence="1">NADH-quinone oxidoreductase subunit D</fullName>
        <ecNumber evidence="1">7.1.1.-</ecNumber>
    </recommendedName>
    <alternativeName>
        <fullName evidence="1">NADH dehydrogenase I subunit D</fullName>
    </alternativeName>
    <alternativeName>
        <fullName evidence="1">NDH-1 subunit D</fullName>
    </alternativeName>
</protein>